<comment type="catalytic activity">
    <reaction evidence="1">
        <text>tRNA(Phe) + L-phenylalanine + ATP = L-phenylalanyl-tRNA(Phe) + AMP + diphosphate + H(+)</text>
        <dbReference type="Rhea" id="RHEA:19413"/>
        <dbReference type="Rhea" id="RHEA-COMP:9668"/>
        <dbReference type="Rhea" id="RHEA-COMP:9699"/>
        <dbReference type="ChEBI" id="CHEBI:15378"/>
        <dbReference type="ChEBI" id="CHEBI:30616"/>
        <dbReference type="ChEBI" id="CHEBI:33019"/>
        <dbReference type="ChEBI" id="CHEBI:58095"/>
        <dbReference type="ChEBI" id="CHEBI:78442"/>
        <dbReference type="ChEBI" id="CHEBI:78531"/>
        <dbReference type="ChEBI" id="CHEBI:456215"/>
        <dbReference type="EC" id="6.1.1.20"/>
    </reaction>
</comment>
<comment type="cofactor">
    <cofactor evidence="1">
        <name>Mg(2+)</name>
        <dbReference type="ChEBI" id="CHEBI:18420"/>
    </cofactor>
    <text evidence="1">Binds 2 magnesium ions per tetramer.</text>
</comment>
<comment type="subunit">
    <text evidence="1">Tetramer of two alpha and two beta subunits.</text>
</comment>
<comment type="subcellular location">
    <subcellularLocation>
        <location evidence="1">Cytoplasm</location>
    </subcellularLocation>
</comment>
<comment type="similarity">
    <text evidence="1">Belongs to the class-II aminoacyl-tRNA synthetase family. Phe-tRNA synthetase alpha subunit type 1 subfamily.</text>
</comment>
<keyword id="KW-0030">Aminoacyl-tRNA synthetase</keyword>
<keyword id="KW-0067">ATP-binding</keyword>
<keyword id="KW-0963">Cytoplasm</keyword>
<keyword id="KW-0436">Ligase</keyword>
<keyword id="KW-0460">Magnesium</keyword>
<keyword id="KW-0479">Metal-binding</keyword>
<keyword id="KW-0547">Nucleotide-binding</keyword>
<keyword id="KW-0648">Protein biosynthesis</keyword>
<name>SYFA_SHIF8</name>
<accession>Q0T4S4</accession>
<feature type="chain" id="PRO_1000006900" description="Phenylalanine--tRNA ligase alpha subunit">
    <location>
        <begin position="1"/>
        <end position="327"/>
    </location>
</feature>
<feature type="binding site" evidence="1">
    <location>
        <position position="252"/>
    </location>
    <ligand>
        <name>Mg(2+)</name>
        <dbReference type="ChEBI" id="CHEBI:18420"/>
        <note>shared with beta subunit</note>
    </ligand>
</feature>
<reference key="1">
    <citation type="journal article" date="2006" name="BMC Genomics">
        <title>Complete genome sequence of Shigella flexneri 5b and comparison with Shigella flexneri 2a.</title>
        <authorList>
            <person name="Nie H."/>
            <person name="Yang F."/>
            <person name="Zhang X."/>
            <person name="Yang J."/>
            <person name="Chen L."/>
            <person name="Wang J."/>
            <person name="Xiong Z."/>
            <person name="Peng J."/>
            <person name="Sun L."/>
            <person name="Dong J."/>
            <person name="Xue Y."/>
            <person name="Xu X."/>
            <person name="Chen S."/>
            <person name="Yao Z."/>
            <person name="Shen Y."/>
            <person name="Jin Q."/>
        </authorList>
    </citation>
    <scope>NUCLEOTIDE SEQUENCE [LARGE SCALE GENOMIC DNA]</scope>
    <source>
        <strain>8401</strain>
    </source>
</reference>
<organism>
    <name type="scientific">Shigella flexneri serotype 5b (strain 8401)</name>
    <dbReference type="NCBI Taxonomy" id="373384"/>
    <lineage>
        <taxon>Bacteria</taxon>
        <taxon>Pseudomonadati</taxon>
        <taxon>Pseudomonadota</taxon>
        <taxon>Gammaproteobacteria</taxon>
        <taxon>Enterobacterales</taxon>
        <taxon>Enterobacteriaceae</taxon>
        <taxon>Shigella</taxon>
    </lineage>
</organism>
<proteinExistence type="inferred from homology"/>
<evidence type="ECO:0000255" key="1">
    <source>
        <dbReference type="HAMAP-Rule" id="MF_00281"/>
    </source>
</evidence>
<sequence length="327" mass="36802">MSHLAELVASAKAAISQASDVAALDNVRVEYLGKKGHLTLQMTTLRELPPEERPAAGAVINEAKEQVQQALNARKAELESAALNARLAAETIDVSLPGRRIENGGLHPVTRTIDRIESFFGELGFTVATGPEIEDDYHNFDALNIPGHHPARADHDTFWFDATRLLRTQTSGVQIRTMKAQQPPIRIIAPGRVYRNDYDQTHTPMFHQMEGLIVDTNISFTNLKGTLHDFLRNFFEEDLQIRFRPSYFPFTEPSAEVDVMGKNGKWLEVLGCGMVHPNVLRNVGIDPEVYSGFAFGMGMERLTMLRYGVTDLRSFFENDLRFLKQFK</sequence>
<dbReference type="EC" id="6.1.1.20" evidence="1"/>
<dbReference type="EMBL" id="CP000266">
    <property type="protein sequence ID" value="ABF03691.1"/>
    <property type="molecule type" value="Genomic_DNA"/>
</dbReference>
<dbReference type="RefSeq" id="WP_000018588.1">
    <property type="nucleotide sequence ID" value="NC_008258.1"/>
</dbReference>
<dbReference type="SMR" id="Q0T4S4"/>
<dbReference type="GeneID" id="86946239"/>
<dbReference type="KEGG" id="sfv:SFV_1509"/>
<dbReference type="HOGENOM" id="CLU_025086_0_1_6"/>
<dbReference type="Proteomes" id="UP000000659">
    <property type="component" value="Chromosome"/>
</dbReference>
<dbReference type="GO" id="GO:0005737">
    <property type="term" value="C:cytoplasm"/>
    <property type="evidence" value="ECO:0007669"/>
    <property type="project" value="UniProtKB-SubCell"/>
</dbReference>
<dbReference type="GO" id="GO:0005524">
    <property type="term" value="F:ATP binding"/>
    <property type="evidence" value="ECO:0007669"/>
    <property type="project" value="UniProtKB-UniRule"/>
</dbReference>
<dbReference type="GO" id="GO:0000287">
    <property type="term" value="F:magnesium ion binding"/>
    <property type="evidence" value="ECO:0007669"/>
    <property type="project" value="UniProtKB-UniRule"/>
</dbReference>
<dbReference type="GO" id="GO:0004826">
    <property type="term" value="F:phenylalanine-tRNA ligase activity"/>
    <property type="evidence" value="ECO:0007669"/>
    <property type="project" value="UniProtKB-UniRule"/>
</dbReference>
<dbReference type="GO" id="GO:0000049">
    <property type="term" value="F:tRNA binding"/>
    <property type="evidence" value="ECO:0007669"/>
    <property type="project" value="InterPro"/>
</dbReference>
<dbReference type="GO" id="GO:0006432">
    <property type="term" value="P:phenylalanyl-tRNA aminoacylation"/>
    <property type="evidence" value="ECO:0007669"/>
    <property type="project" value="UniProtKB-UniRule"/>
</dbReference>
<dbReference type="CDD" id="cd00496">
    <property type="entry name" value="PheRS_alpha_core"/>
    <property type="match status" value="1"/>
</dbReference>
<dbReference type="FunFam" id="3.30.930.10:FF:000003">
    <property type="entry name" value="Phenylalanine--tRNA ligase alpha subunit"/>
    <property type="match status" value="1"/>
</dbReference>
<dbReference type="Gene3D" id="3.30.930.10">
    <property type="entry name" value="Bira Bifunctional Protein, Domain 2"/>
    <property type="match status" value="1"/>
</dbReference>
<dbReference type="HAMAP" id="MF_00281">
    <property type="entry name" value="Phe_tRNA_synth_alpha1"/>
    <property type="match status" value="1"/>
</dbReference>
<dbReference type="InterPro" id="IPR006195">
    <property type="entry name" value="aa-tRNA-synth_II"/>
</dbReference>
<dbReference type="InterPro" id="IPR045864">
    <property type="entry name" value="aa-tRNA-synth_II/BPL/LPL"/>
</dbReference>
<dbReference type="InterPro" id="IPR004529">
    <property type="entry name" value="Phe-tRNA-synth_IIc_asu"/>
</dbReference>
<dbReference type="InterPro" id="IPR004188">
    <property type="entry name" value="Phe-tRNA_ligase_II_N"/>
</dbReference>
<dbReference type="InterPro" id="IPR022911">
    <property type="entry name" value="Phe_tRNA_ligase_alpha1_bac"/>
</dbReference>
<dbReference type="InterPro" id="IPR002319">
    <property type="entry name" value="Phenylalanyl-tRNA_Synthase"/>
</dbReference>
<dbReference type="InterPro" id="IPR010978">
    <property type="entry name" value="tRNA-bd_arm"/>
</dbReference>
<dbReference type="NCBIfam" id="TIGR00468">
    <property type="entry name" value="pheS"/>
    <property type="match status" value="1"/>
</dbReference>
<dbReference type="PANTHER" id="PTHR11538:SF41">
    <property type="entry name" value="PHENYLALANINE--TRNA LIGASE, MITOCHONDRIAL"/>
    <property type="match status" value="1"/>
</dbReference>
<dbReference type="PANTHER" id="PTHR11538">
    <property type="entry name" value="PHENYLALANYL-TRNA SYNTHETASE"/>
    <property type="match status" value="1"/>
</dbReference>
<dbReference type="Pfam" id="PF02912">
    <property type="entry name" value="Phe_tRNA-synt_N"/>
    <property type="match status" value="1"/>
</dbReference>
<dbReference type="Pfam" id="PF01409">
    <property type="entry name" value="tRNA-synt_2d"/>
    <property type="match status" value="1"/>
</dbReference>
<dbReference type="SUPFAM" id="SSF55681">
    <property type="entry name" value="Class II aaRS and biotin synthetases"/>
    <property type="match status" value="1"/>
</dbReference>
<dbReference type="SUPFAM" id="SSF46589">
    <property type="entry name" value="tRNA-binding arm"/>
    <property type="match status" value="1"/>
</dbReference>
<dbReference type="PROSITE" id="PS50862">
    <property type="entry name" value="AA_TRNA_LIGASE_II"/>
    <property type="match status" value="1"/>
</dbReference>
<protein>
    <recommendedName>
        <fullName evidence="1">Phenylalanine--tRNA ligase alpha subunit</fullName>
        <ecNumber evidence="1">6.1.1.20</ecNumber>
    </recommendedName>
    <alternativeName>
        <fullName evidence="1">Phenylalanyl-tRNA synthetase alpha subunit</fullName>
        <shortName evidence="1">PheRS</shortName>
    </alternativeName>
</protein>
<gene>
    <name evidence="1" type="primary">pheS</name>
    <name type="ordered locus">SFV_1509</name>
</gene>